<sequence>MSQVIDSKHTPMMQQYLRLKAEAGPLLLFYRMGDFYEMFYEDAERAARLLNLTLTKRGNSNGTPIPMAGIPVHAMEQYLARLVALGESVAICEQIGDPAAAKGPVERRIVRIVTPGTLTDEALLPAKADRALAAVCVTGKREPRAGLAWLNLASGAFHVTECAPGQLESELHRIAPAELIQAESAELHMAFEGARTRVPDWHFEADGARAQLLAHFKTDSLGGFDVEDMPAAVCAAGALLRYAARTQSQALAHVQTIAAERPGQYVLLDPVTRRNLELTQTLSGEESPTLFSLLDGCRTPMGSRLLRRWLHHPLRENEPVLARQHAIATMLTARQEGEQAFAAAALLETLRDALNAFPDIERIAARVALRSVRPRELASLRDALVALPALHASLAPLSGSPRARELAAQLAMPPDIGELLARAVASEPAVAIRDGGVIAAGFDSELDELRALATDGGDFLVQLEARERERTGIGNLRVEFNRVHGFYIEVSKGQTDKVPEDYRRRQTLKNAERYITPELKTWEDRVLSAQDRSLAREKWLYEQLLDALAQYVRPLSQCASALAELDTLAALAEHARRHDWVAPELIDGAEIDIEAGRHPVVERAIERFTPNGCRLDQTRRMLLITGPNMGGKSTYMRQVALIALLARTGSFVPATRARVGRLDRIFTRIGAADDLAGGRSTFMMEMTEAAAILAASTPASLVLMDEIGRGTSTYDGLALAWAIAYRLLTHNRALTLFATHYFELTRLPAEQPTAANVHLAAAESAGGIVFLHEVREGPASRSYGIQVAQRAGVPAAVIRQASRELERLEAQGAPTPQLGLFAAALDADVQSQAMTEQAEDAAALAQLRDQLAAIDPDSLTPREALDALYRLKQHLT</sequence>
<gene>
    <name evidence="1" type="primary">mutS</name>
    <name type="ordered locus">BB1660</name>
</gene>
<proteinExistence type="inferred from homology"/>
<keyword id="KW-0067">ATP-binding</keyword>
<keyword id="KW-0227">DNA damage</keyword>
<keyword id="KW-0234">DNA repair</keyword>
<keyword id="KW-0238">DNA-binding</keyword>
<keyword id="KW-0547">Nucleotide-binding</keyword>
<reference key="1">
    <citation type="journal article" date="2003" name="Nat. Genet.">
        <title>Comparative analysis of the genome sequences of Bordetella pertussis, Bordetella parapertussis and Bordetella bronchiseptica.</title>
        <authorList>
            <person name="Parkhill J."/>
            <person name="Sebaihia M."/>
            <person name="Preston A."/>
            <person name="Murphy L.D."/>
            <person name="Thomson N.R."/>
            <person name="Harris D.E."/>
            <person name="Holden M.T.G."/>
            <person name="Churcher C.M."/>
            <person name="Bentley S.D."/>
            <person name="Mungall K.L."/>
            <person name="Cerdeno-Tarraga A.-M."/>
            <person name="Temple L."/>
            <person name="James K.D."/>
            <person name="Harris B."/>
            <person name="Quail M.A."/>
            <person name="Achtman M."/>
            <person name="Atkin R."/>
            <person name="Baker S."/>
            <person name="Basham D."/>
            <person name="Bason N."/>
            <person name="Cherevach I."/>
            <person name="Chillingworth T."/>
            <person name="Collins M."/>
            <person name="Cronin A."/>
            <person name="Davis P."/>
            <person name="Doggett J."/>
            <person name="Feltwell T."/>
            <person name="Goble A."/>
            <person name="Hamlin N."/>
            <person name="Hauser H."/>
            <person name="Holroyd S."/>
            <person name="Jagels K."/>
            <person name="Leather S."/>
            <person name="Moule S."/>
            <person name="Norberczak H."/>
            <person name="O'Neil S."/>
            <person name="Ormond D."/>
            <person name="Price C."/>
            <person name="Rabbinowitsch E."/>
            <person name="Rutter S."/>
            <person name="Sanders M."/>
            <person name="Saunders D."/>
            <person name="Seeger K."/>
            <person name="Sharp S."/>
            <person name="Simmonds M."/>
            <person name="Skelton J."/>
            <person name="Squares R."/>
            <person name="Squares S."/>
            <person name="Stevens K."/>
            <person name="Unwin L."/>
            <person name="Whitehead S."/>
            <person name="Barrell B.G."/>
            <person name="Maskell D.J."/>
        </authorList>
    </citation>
    <scope>NUCLEOTIDE SEQUENCE [LARGE SCALE GENOMIC DNA]</scope>
    <source>
        <strain>ATCC BAA-588 / NCTC 13252 / RB50</strain>
    </source>
</reference>
<name>MUTS_BORBR</name>
<evidence type="ECO:0000255" key="1">
    <source>
        <dbReference type="HAMAP-Rule" id="MF_00096"/>
    </source>
</evidence>
<evidence type="ECO:0000305" key="2"/>
<protein>
    <recommendedName>
        <fullName evidence="1">DNA mismatch repair protein MutS</fullName>
    </recommendedName>
</protein>
<dbReference type="EMBL" id="BX640442">
    <property type="protein sequence ID" value="CAE32157.1"/>
    <property type="status" value="ALT_INIT"/>
    <property type="molecule type" value="Genomic_DNA"/>
</dbReference>
<dbReference type="SMR" id="Q7WLT5"/>
<dbReference type="KEGG" id="bbr:BB1660"/>
<dbReference type="eggNOG" id="COG0249">
    <property type="taxonomic scope" value="Bacteria"/>
</dbReference>
<dbReference type="HOGENOM" id="CLU_002472_4_0_4"/>
<dbReference type="Proteomes" id="UP000001027">
    <property type="component" value="Chromosome"/>
</dbReference>
<dbReference type="GO" id="GO:0005829">
    <property type="term" value="C:cytosol"/>
    <property type="evidence" value="ECO:0007669"/>
    <property type="project" value="TreeGrafter"/>
</dbReference>
<dbReference type="GO" id="GO:0005524">
    <property type="term" value="F:ATP binding"/>
    <property type="evidence" value="ECO:0007669"/>
    <property type="project" value="UniProtKB-UniRule"/>
</dbReference>
<dbReference type="GO" id="GO:0140664">
    <property type="term" value="F:ATP-dependent DNA damage sensor activity"/>
    <property type="evidence" value="ECO:0007669"/>
    <property type="project" value="InterPro"/>
</dbReference>
<dbReference type="GO" id="GO:0003684">
    <property type="term" value="F:damaged DNA binding"/>
    <property type="evidence" value="ECO:0007669"/>
    <property type="project" value="UniProtKB-UniRule"/>
</dbReference>
<dbReference type="GO" id="GO:0030983">
    <property type="term" value="F:mismatched DNA binding"/>
    <property type="evidence" value="ECO:0007669"/>
    <property type="project" value="InterPro"/>
</dbReference>
<dbReference type="GO" id="GO:0006298">
    <property type="term" value="P:mismatch repair"/>
    <property type="evidence" value="ECO:0007669"/>
    <property type="project" value="UniProtKB-UniRule"/>
</dbReference>
<dbReference type="CDD" id="cd03284">
    <property type="entry name" value="ABC_MutS1"/>
    <property type="match status" value="1"/>
</dbReference>
<dbReference type="FunFam" id="1.10.1420.10:FF:000002">
    <property type="entry name" value="DNA mismatch repair protein MutS"/>
    <property type="match status" value="1"/>
</dbReference>
<dbReference type="FunFam" id="3.40.1170.10:FF:000001">
    <property type="entry name" value="DNA mismatch repair protein MutS"/>
    <property type="match status" value="1"/>
</dbReference>
<dbReference type="Gene3D" id="1.10.1420.10">
    <property type="match status" value="2"/>
</dbReference>
<dbReference type="Gene3D" id="6.10.140.430">
    <property type="match status" value="1"/>
</dbReference>
<dbReference type="Gene3D" id="3.40.1170.10">
    <property type="entry name" value="DNA repair protein MutS, domain I"/>
    <property type="match status" value="1"/>
</dbReference>
<dbReference type="Gene3D" id="3.30.420.110">
    <property type="entry name" value="MutS, connector domain"/>
    <property type="match status" value="1"/>
</dbReference>
<dbReference type="Gene3D" id="3.40.50.300">
    <property type="entry name" value="P-loop containing nucleotide triphosphate hydrolases"/>
    <property type="match status" value="1"/>
</dbReference>
<dbReference type="HAMAP" id="MF_00096">
    <property type="entry name" value="MutS"/>
    <property type="match status" value="1"/>
</dbReference>
<dbReference type="InterPro" id="IPR005748">
    <property type="entry name" value="DNA_mismatch_repair_MutS"/>
</dbReference>
<dbReference type="InterPro" id="IPR007695">
    <property type="entry name" value="DNA_mismatch_repair_MutS-lik_N"/>
</dbReference>
<dbReference type="InterPro" id="IPR017261">
    <property type="entry name" value="DNA_mismatch_repair_MutS/MSH"/>
</dbReference>
<dbReference type="InterPro" id="IPR000432">
    <property type="entry name" value="DNA_mismatch_repair_MutS_C"/>
</dbReference>
<dbReference type="InterPro" id="IPR007861">
    <property type="entry name" value="DNA_mismatch_repair_MutS_clamp"/>
</dbReference>
<dbReference type="InterPro" id="IPR007696">
    <property type="entry name" value="DNA_mismatch_repair_MutS_core"/>
</dbReference>
<dbReference type="InterPro" id="IPR016151">
    <property type="entry name" value="DNA_mismatch_repair_MutS_N"/>
</dbReference>
<dbReference type="InterPro" id="IPR036187">
    <property type="entry name" value="DNA_mismatch_repair_MutS_sf"/>
</dbReference>
<dbReference type="InterPro" id="IPR007860">
    <property type="entry name" value="DNA_mmatch_repair_MutS_con_dom"/>
</dbReference>
<dbReference type="InterPro" id="IPR045076">
    <property type="entry name" value="MutS"/>
</dbReference>
<dbReference type="InterPro" id="IPR036678">
    <property type="entry name" value="MutS_con_dom_sf"/>
</dbReference>
<dbReference type="InterPro" id="IPR027417">
    <property type="entry name" value="P-loop_NTPase"/>
</dbReference>
<dbReference type="NCBIfam" id="TIGR01070">
    <property type="entry name" value="mutS1"/>
    <property type="match status" value="1"/>
</dbReference>
<dbReference type="NCBIfam" id="NF003810">
    <property type="entry name" value="PRK05399.1"/>
    <property type="match status" value="1"/>
</dbReference>
<dbReference type="PANTHER" id="PTHR11361:SF34">
    <property type="entry name" value="DNA MISMATCH REPAIR PROTEIN MSH1, MITOCHONDRIAL"/>
    <property type="match status" value="1"/>
</dbReference>
<dbReference type="PANTHER" id="PTHR11361">
    <property type="entry name" value="DNA MISMATCH REPAIR PROTEIN MUTS FAMILY MEMBER"/>
    <property type="match status" value="1"/>
</dbReference>
<dbReference type="Pfam" id="PF01624">
    <property type="entry name" value="MutS_I"/>
    <property type="match status" value="1"/>
</dbReference>
<dbReference type="Pfam" id="PF05188">
    <property type="entry name" value="MutS_II"/>
    <property type="match status" value="1"/>
</dbReference>
<dbReference type="Pfam" id="PF05192">
    <property type="entry name" value="MutS_III"/>
    <property type="match status" value="1"/>
</dbReference>
<dbReference type="Pfam" id="PF05190">
    <property type="entry name" value="MutS_IV"/>
    <property type="match status" value="1"/>
</dbReference>
<dbReference type="Pfam" id="PF00488">
    <property type="entry name" value="MutS_V"/>
    <property type="match status" value="1"/>
</dbReference>
<dbReference type="PIRSF" id="PIRSF037677">
    <property type="entry name" value="DNA_mis_repair_Msh6"/>
    <property type="match status" value="1"/>
</dbReference>
<dbReference type="SMART" id="SM00534">
    <property type="entry name" value="MUTSac"/>
    <property type="match status" value="1"/>
</dbReference>
<dbReference type="SMART" id="SM00533">
    <property type="entry name" value="MUTSd"/>
    <property type="match status" value="1"/>
</dbReference>
<dbReference type="SUPFAM" id="SSF55271">
    <property type="entry name" value="DNA repair protein MutS, domain I"/>
    <property type="match status" value="1"/>
</dbReference>
<dbReference type="SUPFAM" id="SSF53150">
    <property type="entry name" value="DNA repair protein MutS, domain II"/>
    <property type="match status" value="1"/>
</dbReference>
<dbReference type="SUPFAM" id="SSF48334">
    <property type="entry name" value="DNA repair protein MutS, domain III"/>
    <property type="match status" value="1"/>
</dbReference>
<dbReference type="SUPFAM" id="SSF52540">
    <property type="entry name" value="P-loop containing nucleoside triphosphate hydrolases"/>
    <property type="match status" value="1"/>
</dbReference>
<dbReference type="PROSITE" id="PS00486">
    <property type="entry name" value="DNA_MISMATCH_REPAIR_2"/>
    <property type="match status" value="1"/>
</dbReference>
<accession>Q7WLT5</accession>
<comment type="function">
    <text evidence="1">This protein is involved in the repair of mismatches in DNA. It is possible that it carries out the mismatch recognition step. This protein has a weak ATPase activity.</text>
</comment>
<comment type="similarity">
    <text evidence="1">Belongs to the DNA mismatch repair MutS family.</text>
</comment>
<comment type="sequence caution" evidence="2">
    <conflict type="erroneous initiation">
        <sequence resource="EMBL-CDS" id="CAE32157"/>
    </conflict>
</comment>
<feature type="chain" id="PRO_0000115072" description="DNA mismatch repair protein MutS">
    <location>
        <begin position="1"/>
        <end position="876"/>
    </location>
</feature>
<feature type="binding site" evidence="1">
    <location>
        <begin position="626"/>
        <end position="633"/>
    </location>
    <ligand>
        <name>ATP</name>
        <dbReference type="ChEBI" id="CHEBI:30616"/>
    </ligand>
</feature>
<organism>
    <name type="scientific">Bordetella bronchiseptica (strain ATCC BAA-588 / NCTC 13252 / RB50)</name>
    <name type="common">Alcaligenes bronchisepticus</name>
    <dbReference type="NCBI Taxonomy" id="257310"/>
    <lineage>
        <taxon>Bacteria</taxon>
        <taxon>Pseudomonadati</taxon>
        <taxon>Pseudomonadota</taxon>
        <taxon>Betaproteobacteria</taxon>
        <taxon>Burkholderiales</taxon>
        <taxon>Alcaligenaceae</taxon>
        <taxon>Bordetella</taxon>
    </lineage>
</organism>